<name>TBA1_CHLRE</name>
<evidence type="ECO:0000250" key="1"/>
<evidence type="ECO:0000250" key="2">
    <source>
        <dbReference type="UniProtKB" id="P68363"/>
    </source>
</evidence>
<evidence type="ECO:0000269" key="3">
    <source>
    </source>
</evidence>
<evidence type="ECO:0000305" key="4"/>
<sequence>MREVISIHIGQAGIQVGNACWELYCLEHGIQPDGQMPSDKTIGGGDDAFNTFFSETGAGKHVPRCIFLDLEPTVVDEVRTGTYRQLFHPEQLISGKEDAANNFARGHYTIGKEIVDLALDRIRKLADNCTGLQGFLVFNAVGGGTGSGLGSLLLERLSVDYGKKSKLGFTVYPSPQVSTAVVEPYNSVLSTHSLLEHTDVAVMLDNEAIYDICRRSLDIERPTYTNLNRLIAQVISSLTASLRFDGALNVDITEFQTNLVPYPRIHFMLSSYAPIISAEKAYHEQLSVAEITNAAFEPASMMVKCDPRHGKYMACCLMYRGDVVPKDVNASVATIKTKRTIQFVDWCPTGFKCGINYQPPTVVPGGDLAKVQRAVCMISNSTAIGEIFSRLDHKFDLMYAKRAFVHWYVGEGMEEGEFSEAREDLAALEKDFEEVGAESAEGAGEGEGEEY</sequence>
<proteinExistence type="evidence at protein level"/>
<reference key="1">
    <citation type="journal article" date="1985" name="Mol. Cell. Biol.">
        <title>The two alpha-tubulin genes of Chlamydomonas reinhardi code for slightly different proteins.</title>
        <authorList>
            <person name="Silflow C.D."/>
            <person name="Chisholm R.L."/>
            <person name="Conner T.W."/>
            <person name="Ranum L.P.W."/>
        </authorList>
    </citation>
    <scope>NUCLEOTIDE SEQUENCE [GENOMIC DNA]</scope>
</reference>
<reference key="2">
    <citation type="journal article" date="1984" name="Mol. Cell. Biol.">
        <title>Repeated consensus sequence and pseudopromoters in the four coordinately regulated tubulin genes of Chlamydomonas reinhardi.</title>
        <authorList>
            <person name="Brunke K.J."/>
            <person name="Anthony J.G."/>
            <person name="Sternberg E.J."/>
            <person name="Weeks D.P."/>
        </authorList>
    </citation>
    <scope>NUCLEOTIDE SEQUENCE [GENOMIC DNA] OF 1-15</scope>
</reference>
<reference key="3">
    <citation type="journal article" date="1987" name="Proc. Natl. Acad. Sci. U.S.A.">
        <title>Identification of an acetylation site of Chlamydomonas alpha-tubulin.</title>
        <authorList>
            <person name="Ledizet M."/>
            <person name="Piperno G."/>
        </authorList>
    </citation>
    <scope>ACETYLATION AT LYS-40</scope>
</reference>
<comment type="function">
    <text>Tubulin is the major constituent of microtubules, a cylinder consisting of laterally associated linear protofilaments composed of alpha- and beta-tubulin heterodimers. Microtubules grow by the addition of GTP-tubulin dimers to the microtubule end, where a stabilizing cap forms. Below the cap, tubulin dimers are in GDP-bound state, owing to GTPase activity of alpha-tubulin.</text>
</comment>
<comment type="catalytic activity">
    <reaction evidence="2">
        <text>GTP + H2O = GDP + phosphate + H(+)</text>
        <dbReference type="Rhea" id="RHEA:19669"/>
        <dbReference type="ChEBI" id="CHEBI:15377"/>
        <dbReference type="ChEBI" id="CHEBI:15378"/>
        <dbReference type="ChEBI" id="CHEBI:37565"/>
        <dbReference type="ChEBI" id="CHEBI:43474"/>
        <dbReference type="ChEBI" id="CHEBI:58189"/>
    </reaction>
    <physiologicalReaction direction="left-to-right" evidence="2">
        <dbReference type="Rhea" id="RHEA:19670"/>
    </physiologicalReaction>
</comment>
<comment type="cofactor">
    <cofactor evidence="2">
        <name>Mg(2+)</name>
        <dbReference type="ChEBI" id="CHEBI:18420"/>
    </cofactor>
</comment>
<comment type="subunit">
    <text>Dimer of alpha and beta chains. A typical microtubule is a hollow water-filled tube with an outer diameter of 25 nm and an inner diameter of 15 nM. Alpha-beta heterodimers associate head-to-tail to form protofilaments running lengthwise along the microtubule wall with the beta-tubulin subunit facing the microtubule plus end conferring a structural polarity. Microtubules usually have 13 protofilaments but different protofilament numbers can be found in some organisms and specialized cells.</text>
</comment>
<comment type="subcellular location">
    <subcellularLocation>
        <location>Cytoplasm</location>
        <location>Cytoskeleton</location>
    </subcellularLocation>
</comment>
<comment type="PTM">
    <text evidence="1">Undergoes a tyrosination/detyrosination cycle, the cyclic removal and re-addition of a C-terminal tyrosine residue by the enzymes tubulin tyrosine carboxypeptidase (TTCP) and tubulin tyrosine ligase (TTL), respectively.</text>
</comment>
<comment type="PTM">
    <text evidence="1">Acetylation of alpha chains at Lys-40 stabilizes microtubules and affects affinity and processivity of microtubule motors. This modification has a role in multiple cellular functions, ranging from cell motility, cell cycle progression or cell differentiation to intracellular trafficking and signaling (By similarity).</text>
</comment>
<comment type="similarity">
    <text evidence="4">Belongs to the tubulin family.</text>
</comment>
<protein>
    <recommendedName>
        <fullName>Tubulin alpha-1 chain</fullName>
        <ecNumber evidence="2">3.6.5.-</ecNumber>
    </recommendedName>
</protein>
<gene>
    <name type="primary">TUBA1</name>
</gene>
<organism>
    <name type="scientific">Chlamydomonas reinhardtii</name>
    <name type="common">Chlamydomonas smithii</name>
    <dbReference type="NCBI Taxonomy" id="3055"/>
    <lineage>
        <taxon>Eukaryota</taxon>
        <taxon>Viridiplantae</taxon>
        <taxon>Chlorophyta</taxon>
        <taxon>core chlorophytes</taxon>
        <taxon>Chlorophyceae</taxon>
        <taxon>CS clade</taxon>
        <taxon>Chlamydomonadales</taxon>
        <taxon>Chlamydomonadaceae</taxon>
        <taxon>Chlamydomonas</taxon>
    </lineage>
</organism>
<accession>P09204</accession>
<accession>P94006</accession>
<feature type="chain" id="PRO_0000048154" description="Tubulin alpha-1 chain">
    <location>
        <begin position="1"/>
        <end position="451"/>
    </location>
</feature>
<feature type="active site" evidence="2">
    <location>
        <position position="254"/>
    </location>
</feature>
<feature type="binding site" evidence="2">
    <location>
        <position position="11"/>
    </location>
    <ligand>
        <name>GTP</name>
        <dbReference type="ChEBI" id="CHEBI:37565"/>
    </ligand>
</feature>
<feature type="binding site" evidence="2">
    <location>
        <position position="71"/>
    </location>
    <ligand>
        <name>GTP</name>
        <dbReference type="ChEBI" id="CHEBI:37565"/>
    </ligand>
</feature>
<feature type="binding site" evidence="2">
    <location>
        <position position="71"/>
    </location>
    <ligand>
        <name>Mg(2+)</name>
        <dbReference type="ChEBI" id="CHEBI:18420"/>
    </ligand>
</feature>
<feature type="binding site" evidence="2">
    <location>
        <position position="144"/>
    </location>
    <ligand>
        <name>GTP</name>
        <dbReference type="ChEBI" id="CHEBI:37565"/>
    </ligand>
</feature>
<feature type="binding site" evidence="2">
    <location>
        <position position="145"/>
    </location>
    <ligand>
        <name>GTP</name>
        <dbReference type="ChEBI" id="CHEBI:37565"/>
    </ligand>
</feature>
<feature type="binding site" evidence="2">
    <location>
        <position position="179"/>
    </location>
    <ligand>
        <name>GTP</name>
        <dbReference type="ChEBI" id="CHEBI:37565"/>
    </ligand>
</feature>
<feature type="binding site" evidence="2">
    <location>
        <position position="206"/>
    </location>
    <ligand>
        <name>GTP</name>
        <dbReference type="ChEBI" id="CHEBI:37565"/>
    </ligand>
</feature>
<feature type="binding site" evidence="2">
    <location>
        <position position="228"/>
    </location>
    <ligand>
        <name>GTP</name>
        <dbReference type="ChEBI" id="CHEBI:37565"/>
    </ligand>
</feature>
<feature type="site" description="Involved in polymerization">
    <location>
        <position position="451"/>
    </location>
</feature>
<feature type="modified residue" description="N6-acetyllysine" evidence="3">
    <location>
        <position position="40"/>
    </location>
</feature>
<keyword id="KW-0002">3D-structure</keyword>
<keyword id="KW-0007">Acetylation</keyword>
<keyword id="KW-0963">Cytoplasm</keyword>
<keyword id="KW-0206">Cytoskeleton</keyword>
<keyword id="KW-0342">GTP-binding</keyword>
<keyword id="KW-0378">Hydrolase</keyword>
<keyword id="KW-0460">Magnesium</keyword>
<keyword id="KW-0479">Metal-binding</keyword>
<keyword id="KW-0493">Microtubule</keyword>
<keyword id="KW-0547">Nucleotide-binding</keyword>
<dbReference type="EC" id="3.6.5.-" evidence="2"/>
<dbReference type="EMBL" id="M11447">
    <property type="protein sequence ID" value="AAA33095.1"/>
    <property type="molecule type" value="Genomic_DNA"/>
</dbReference>
<dbReference type="EMBL" id="K01805">
    <property type="protein sequence ID" value="AAA33096.1"/>
    <property type="molecule type" value="Genomic_DNA"/>
</dbReference>
<dbReference type="PIR" id="A53298">
    <property type="entry name" value="A53298"/>
</dbReference>
<dbReference type="RefSeq" id="XP_001691876.1">
    <property type="nucleotide sequence ID" value="XM_001691824.1"/>
</dbReference>
<dbReference type="RefSeq" id="XP_001703110.1">
    <property type="nucleotide sequence ID" value="XM_001703058.1"/>
</dbReference>
<dbReference type="PDB" id="6U42">
    <property type="method" value="EM"/>
    <property type="resolution" value="3.40 A"/>
    <property type="chains" value="0B/0F/0H/0J/0L/0N/0P/0R/0V/0X/0Z/1B/1D/1F/1H/1L/1N/1P/1R/1T/1V/1X/1Z/2/2B/2D/2F/2H/2J/2L=1-451"/>
</dbReference>
<dbReference type="PDB" id="6VE7">
    <property type="method" value="EM"/>
    <property type="resolution" value="3.60 A"/>
    <property type="chains" value="0/1/5/6/7/D/E/F/G/L/M/P/S/X/Y/Z/e/f/h/k/m/o/s/y=1-451"/>
</dbReference>
<dbReference type="PDB" id="7JU4">
    <property type="method" value="EM"/>
    <property type="resolution" value="3.40 A"/>
    <property type="chains" value="7/9/D/H/J/L/P/R/T/X/Z/j/t/z=1-451"/>
</dbReference>
<dbReference type="PDB" id="7KZM">
    <property type="method" value="EM"/>
    <property type="resolution" value="7.50 A"/>
    <property type="chains" value="A2/A4/A6/B2/B4/B6=1-451"/>
</dbReference>
<dbReference type="PDB" id="7KZO">
    <property type="method" value="EM"/>
    <property type="resolution" value="3.30 A"/>
    <property type="chains" value="A2/A4/A6/B2/B4/B6=1-451"/>
</dbReference>
<dbReference type="PDB" id="7N61">
    <property type="method" value="EM"/>
    <property type="resolution" value="3.50 A"/>
    <property type="chains" value="1b/1d/1f/1h/2b/2d/2f/2h/3b/3d/3f/3h/4b/4d/4f/4h/5b/5d/5f/5h/6b/6d/6f/6h/7b/7d/7f/7h/8b/8d=1-451"/>
</dbReference>
<dbReference type="PDB" id="7N6G">
    <property type="method" value="EM"/>
    <property type="resolution" value="3.60 A"/>
    <property type="chains" value="1b/1d/1f/1h/2b/2d/2f/2h/3b/3d/3f/3h/4b/4d/4f/4h/5b/5d/5f/5h/6b/6d/6f/6h/7b/7d/7f/7h/8b/8d=1-451"/>
</dbReference>
<dbReference type="PDB" id="7SOM">
    <property type="method" value="EM"/>
    <property type="resolution" value="3.70 A"/>
    <property type="chains" value="AB/AD/AF/AH/AJ/AL/BB/BD/BF/BH/BJ/BL/CB/CD/CF/CH/CJ/DB/DD/DF/DH/DJ/DL/EB/ED/EF/EH/EJ/EL/FB=1-451"/>
</dbReference>
<dbReference type="PDB" id="7SQC">
    <property type="method" value="EM"/>
    <property type="resolution" value="3.80 A"/>
    <property type="chains" value="NB/ND/NF/NH/NJ/NL/NN/OD/OF/OH/OJ/OL/ON/OP/PD/PF/PH/PJ/PL/PN/PP/QD/QF/QH/QJ/QL/QN/QP/RD/RF=1-451"/>
</dbReference>
<dbReference type="PDB" id="8GLV">
    <property type="method" value="EM"/>
    <property type="resolution" value="3.10 A"/>
    <property type="chains" value="0B/0F/0H/0J/0L/0N/0P/0R/0V/0X/0Z/1B/1D/1F/1H/1L/1N/1P/1R/1T/1V/1X/1Z/2B/2D/2F/2H/2J/2L/2N=1-451"/>
</dbReference>
<dbReference type="PDBsum" id="6U42"/>
<dbReference type="PDBsum" id="6VE7"/>
<dbReference type="PDBsum" id="7JU4"/>
<dbReference type="PDBsum" id="7KZM"/>
<dbReference type="PDBsum" id="7KZO"/>
<dbReference type="PDBsum" id="7N61"/>
<dbReference type="PDBsum" id="7N6G"/>
<dbReference type="PDBsum" id="7SOM"/>
<dbReference type="PDBsum" id="7SQC"/>
<dbReference type="PDBsum" id="8GLV"/>
<dbReference type="EMDB" id="EMD-20631"/>
<dbReference type="EMDB" id="EMD-20858"/>
<dbReference type="EMDB" id="EMD-22481"/>
<dbReference type="EMDB" id="EMD-23082"/>
<dbReference type="EMDB" id="EMD-23084"/>
<dbReference type="EMDB" id="EMD-24191"/>
<dbReference type="EMDB" id="EMD-24207"/>
<dbReference type="EMDB" id="EMD-25361"/>
<dbReference type="EMDB" id="EMD-25381"/>
<dbReference type="EMDB" id="EMD-40220"/>
<dbReference type="SMR" id="P09204"/>
<dbReference type="iPTMnet" id="P09204"/>
<dbReference type="PaxDb" id="3055-EDO96640"/>
<dbReference type="ProMEX" id="P09204"/>
<dbReference type="EnsemblPlants" id="PNW83770">
    <property type="protein sequence ID" value="PNW83770"/>
    <property type="gene ID" value="CHLRE_04g216850v5"/>
</dbReference>
<dbReference type="EnsemblPlants" id="PNW85531">
    <property type="protein sequence ID" value="PNW85531"/>
    <property type="gene ID" value="CHLRE_03g190950v5"/>
</dbReference>
<dbReference type="Gramene" id="PNW83770">
    <property type="protein sequence ID" value="PNW83770"/>
    <property type="gene ID" value="CHLRE_04g216850v5"/>
</dbReference>
<dbReference type="Gramene" id="PNW85531">
    <property type="protein sequence ID" value="PNW85531"/>
    <property type="gene ID" value="CHLRE_03g190950v5"/>
</dbReference>
<dbReference type="KEGG" id="cre:CHLRE_03g190950v5"/>
<dbReference type="KEGG" id="cre:CHLRE_04g216850v5"/>
<dbReference type="eggNOG" id="KOG1376">
    <property type="taxonomic scope" value="Eukaryota"/>
</dbReference>
<dbReference type="HOGENOM" id="CLU_015718_0_0_1"/>
<dbReference type="OMA" id="LICTHGL"/>
<dbReference type="OrthoDB" id="1844at2759"/>
<dbReference type="GO" id="GO:0005737">
    <property type="term" value="C:cytoplasm"/>
    <property type="evidence" value="ECO:0007669"/>
    <property type="project" value="UniProtKB-KW"/>
</dbReference>
<dbReference type="GO" id="GO:0005874">
    <property type="term" value="C:microtubule"/>
    <property type="evidence" value="ECO:0007669"/>
    <property type="project" value="UniProtKB-KW"/>
</dbReference>
<dbReference type="GO" id="GO:0005525">
    <property type="term" value="F:GTP binding"/>
    <property type="evidence" value="ECO:0007669"/>
    <property type="project" value="UniProtKB-KW"/>
</dbReference>
<dbReference type="GO" id="GO:0016787">
    <property type="term" value="F:hydrolase activity"/>
    <property type="evidence" value="ECO:0007669"/>
    <property type="project" value="UniProtKB-KW"/>
</dbReference>
<dbReference type="GO" id="GO:0046872">
    <property type="term" value="F:metal ion binding"/>
    <property type="evidence" value="ECO:0007669"/>
    <property type="project" value="UniProtKB-KW"/>
</dbReference>
<dbReference type="GO" id="GO:0005200">
    <property type="term" value="F:structural constituent of cytoskeleton"/>
    <property type="evidence" value="ECO:0007669"/>
    <property type="project" value="InterPro"/>
</dbReference>
<dbReference type="GO" id="GO:0007017">
    <property type="term" value="P:microtubule-based process"/>
    <property type="evidence" value="ECO:0007669"/>
    <property type="project" value="InterPro"/>
</dbReference>
<dbReference type="CDD" id="cd02186">
    <property type="entry name" value="alpha_tubulin"/>
    <property type="match status" value="1"/>
</dbReference>
<dbReference type="FunFam" id="1.10.287.600:FF:000005">
    <property type="entry name" value="Tubulin alpha chain"/>
    <property type="match status" value="1"/>
</dbReference>
<dbReference type="FunFam" id="3.30.1330.20:FF:000001">
    <property type="entry name" value="Tubulin alpha chain"/>
    <property type="match status" value="1"/>
</dbReference>
<dbReference type="FunFam" id="3.40.50.1440:FF:000004">
    <property type="entry name" value="Tubulin alpha chain"/>
    <property type="match status" value="1"/>
</dbReference>
<dbReference type="Gene3D" id="1.10.287.600">
    <property type="entry name" value="Helix hairpin bin"/>
    <property type="match status" value="1"/>
</dbReference>
<dbReference type="Gene3D" id="3.30.1330.20">
    <property type="entry name" value="Tubulin/FtsZ, C-terminal domain"/>
    <property type="match status" value="1"/>
</dbReference>
<dbReference type="Gene3D" id="3.40.50.1440">
    <property type="entry name" value="Tubulin/FtsZ, GTPase domain"/>
    <property type="match status" value="1"/>
</dbReference>
<dbReference type="InterPro" id="IPR002452">
    <property type="entry name" value="Alpha_tubulin"/>
</dbReference>
<dbReference type="InterPro" id="IPR008280">
    <property type="entry name" value="Tub_FtsZ_C"/>
</dbReference>
<dbReference type="InterPro" id="IPR000217">
    <property type="entry name" value="Tubulin"/>
</dbReference>
<dbReference type="InterPro" id="IPR037103">
    <property type="entry name" value="Tubulin/FtsZ-like_C"/>
</dbReference>
<dbReference type="InterPro" id="IPR018316">
    <property type="entry name" value="Tubulin/FtsZ_2-layer-sand-dom"/>
</dbReference>
<dbReference type="InterPro" id="IPR036525">
    <property type="entry name" value="Tubulin/FtsZ_GTPase_sf"/>
</dbReference>
<dbReference type="InterPro" id="IPR023123">
    <property type="entry name" value="Tubulin_C"/>
</dbReference>
<dbReference type="InterPro" id="IPR017975">
    <property type="entry name" value="Tubulin_CS"/>
</dbReference>
<dbReference type="InterPro" id="IPR003008">
    <property type="entry name" value="Tubulin_FtsZ_GTPase"/>
</dbReference>
<dbReference type="PANTHER" id="PTHR11588">
    <property type="entry name" value="TUBULIN"/>
    <property type="match status" value="1"/>
</dbReference>
<dbReference type="Pfam" id="PF00091">
    <property type="entry name" value="Tubulin"/>
    <property type="match status" value="1"/>
</dbReference>
<dbReference type="Pfam" id="PF03953">
    <property type="entry name" value="Tubulin_C"/>
    <property type="match status" value="1"/>
</dbReference>
<dbReference type="PRINTS" id="PR01162">
    <property type="entry name" value="ALPHATUBULIN"/>
</dbReference>
<dbReference type="PRINTS" id="PR01161">
    <property type="entry name" value="TUBULIN"/>
</dbReference>
<dbReference type="SMART" id="SM00864">
    <property type="entry name" value="Tubulin"/>
    <property type="match status" value="1"/>
</dbReference>
<dbReference type="SMART" id="SM00865">
    <property type="entry name" value="Tubulin_C"/>
    <property type="match status" value="1"/>
</dbReference>
<dbReference type="SUPFAM" id="SSF55307">
    <property type="entry name" value="Tubulin C-terminal domain-like"/>
    <property type="match status" value="1"/>
</dbReference>
<dbReference type="SUPFAM" id="SSF52490">
    <property type="entry name" value="Tubulin nucleotide-binding domain-like"/>
    <property type="match status" value="1"/>
</dbReference>
<dbReference type="PROSITE" id="PS00227">
    <property type="entry name" value="TUBULIN"/>
    <property type="match status" value="1"/>
</dbReference>